<comment type="function">
    <text evidence="1">May be involved in modulating alternative pre-mRNA splicing.</text>
</comment>
<comment type="subcellular location">
    <subcellularLocation>
        <location evidence="1">Nucleus</location>
        <location evidence="1">Nucleolus</location>
    </subcellularLocation>
    <subcellularLocation>
        <location evidence="1">Nucleus speckle</location>
    </subcellularLocation>
</comment>
<comment type="similarity">
    <text evidence="3">Belongs to the ARL6IP4 family.</text>
</comment>
<reference key="1">
    <citation type="journal article" date="2013" name="Nature">
        <title>The zebrafish reference genome sequence and its relationship to the human genome.</title>
        <authorList>
            <person name="Howe K."/>
            <person name="Clark M.D."/>
            <person name="Torroja C.F."/>
            <person name="Torrance J."/>
            <person name="Berthelot C."/>
            <person name="Muffato M."/>
            <person name="Collins J.E."/>
            <person name="Humphray S."/>
            <person name="McLaren K."/>
            <person name="Matthews L."/>
            <person name="McLaren S."/>
            <person name="Sealy I."/>
            <person name="Caccamo M."/>
            <person name="Churcher C."/>
            <person name="Scott C."/>
            <person name="Barrett J.C."/>
            <person name="Koch R."/>
            <person name="Rauch G.J."/>
            <person name="White S."/>
            <person name="Chow W."/>
            <person name="Kilian B."/>
            <person name="Quintais L.T."/>
            <person name="Guerra-Assuncao J.A."/>
            <person name="Zhou Y."/>
            <person name="Gu Y."/>
            <person name="Yen J."/>
            <person name="Vogel J.H."/>
            <person name="Eyre T."/>
            <person name="Redmond S."/>
            <person name="Banerjee R."/>
            <person name="Chi J."/>
            <person name="Fu B."/>
            <person name="Langley E."/>
            <person name="Maguire S.F."/>
            <person name="Laird G.K."/>
            <person name="Lloyd D."/>
            <person name="Kenyon E."/>
            <person name="Donaldson S."/>
            <person name="Sehra H."/>
            <person name="Almeida-King J."/>
            <person name="Loveland J."/>
            <person name="Trevanion S."/>
            <person name="Jones M."/>
            <person name="Quail M."/>
            <person name="Willey D."/>
            <person name="Hunt A."/>
            <person name="Burton J."/>
            <person name="Sims S."/>
            <person name="McLay K."/>
            <person name="Plumb B."/>
            <person name="Davis J."/>
            <person name="Clee C."/>
            <person name="Oliver K."/>
            <person name="Clark R."/>
            <person name="Riddle C."/>
            <person name="Elliot D."/>
            <person name="Threadgold G."/>
            <person name="Harden G."/>
            <person name="Ware D."/>
            <person name="Begum S."/>
            <person name="Mortimore B."/>
            <person name="Kerry G."/>
            <person name="Heath P."/>
            <person name="Phillimore B."/>
            <person name="Tracey A."/>
            <person name="Corby N."/>
            <person name="Dunn M."/>
            <person name="Johnson C."/>
            <person name="Wood J."/>
            <person name="Clark S."/>
            <person name="Pelan S."/>
            <person name="Griffiths G."/>
            <person name="Smith M."/>
            <person name="Glithero R."/>
            <person name="Howden P."/>
            <person name="Barker N."/>
            <person name="Lloyd C."/>
            <person name="Stevens C."/>
            <person name="Harley J."/>
            <person name="Holt K."/>
            <person name="Panagiotidis G."/>
            <person name="Lovell J."/>
            <person name="Beasley H."/>
            <person name="Henderson C."/>
            <person name="Gordon D."/>
            <person name="Auger K."/>
            <person name="Wright D."/>
            <person name="Collins J."/>
            <person name="Raisen C."/>
            <person name="Dyer L."/>
            <person name="Leung K."/>
            <person name="Robertson L."/>
            <person name="Ambridge K."/>
            <person name="Leongamornlert D."/>
            <person name="McGuire S."/>
            <person name="Gilderthorp R."/>
            <person name="Griffiths C."/>
            <person name="Manthravadi D."/>
            <person name="Nichol S."/>
            <person name="Barker G."/>
            <person name="Whitehead S."/>
            <person name="Kay M."/>
            <person name="Brown J."/>
            <person name="Murnane C."/>
            <person name="Gray E."/>
            <person name="Humphries M."/>
            <person name="Sycamore N."/>
            <person name="Barker D."/>
            <person name="Saunders D."/>
            <person name="Wallis J."/>
            <person name="Babbage A."/>
            <person name="Hammond S."/>
            <person name="Mashreghi-Mohammadi M."/>
            <person name="Barr L."/>
            <person name="Martin S."/>
            <person name="Wray P."/>
            <person name="Ellington A."/>
            <person name="Matthews N."/>
            <person name="Ellwood M."/>
            <person name="Woodmansey R."/>
            <person name="Clark G."/>
            <person name="Cooper J."/>
            <person name="Tromans A."/>
            <person name="Grafham D."/>
            <person name="Skuce C."/>
            <person name="Pandian R."/>
            <person name="Andrews R."/>
            <person name="Harrison E."/>
            <person name="Kimberley A."/>
            <person name="Garnett J."/>
            <person name="Fosker N."/>
            <person name="Hall R."/>
            <person name="Garner P."/>
            <person name="Kelly D."/>
            <person name="Bird C."/>
            <person name="Palmer S."/>
            <person name="Gehring I."/>
            <person name="Berger A."/>
            <person name="Dooley C.M."/>
            <person name="Ersan-Urun Z."/>
            <person name="Eser C."/>
            <person name="Geiger H."/>
            <person name="Geisler M."/>
            <person name="Karotki L."/>
            <person name="Kirn A."/>
            <person name="Konantz J."/>
            <person name="Konantz M."/>
            <person name="Oberlander M."/>
            <person name="Rudolph-Geiger S."/>
            <person name="Teucke M."/>
            <person name="Lanz C."/>
            <person name="Raddatz G."/>
            <person name="Osoegawa K."/>
            <person name="Zhu B."/>
            <person name="Rapp A."/>
            <person name="Widaa S."/>
            <person name="Langford C."/>
            <person name="Yang F."/>
            <person name="Schuster S.C."/>
            <person name="Carter N.P."/>
            <person name="Harrow J."/>
            <person name="Ning Z."/>
            <person name="Herrero J."/>
            <person name="Searle S.M."/>
            <person name="Enright A."/>
            <person name="Geisler R."/>
            <person name="Plasterk R.H."/>
            <person name="Lee C."/>
            <person name="Westerfield M."/>
            <person name="de Jong P.J."/>
            <person name="Zon L.I."/>
            <person name="Postlethwait J.H."/>
            <person name="Nusslein-Volhard C."/>
            <person name="Hubbard T.J."/>
            <person name="Roest Crollius H."/>
            <person name="Rogers J."/>
            <person name="Stemple D.L."/>
        </authorList>
    </citation>
    <scope>NUCLEOTIDE SEQUENCE [LARGE SCALE GENOMIC DNA]</scope>
    <source>
        <strain>Tuebingen</strain>
    </source>
</reference>
<reference key="2">
    <citation type="submission" date="2005-05" db="EMBL/GenBank/DDBJ databases">
        <authorList>
            <consortium name="NIH - Zebrafish Gene Collection (ZGC) project"/>
        </authorList>
    </citation>
    <scope>NUCLEOTIDE SEQUENCE [LARGE SCALE MRNA]</scope>
    <source>
        <tissue>Larval eye</tissue>
    </source>
</reference>
<keyword id="KW-0507">mRNA processing</keyword>
<keyword id="KW-0508">mRNA splicing</keyword>
<keyword id="KW-0539">Nucleus</keyword>
<keyword id="KW-1185">Reference proteome</keyword>
<evidence type="ECO:0000250" key="1"/>
<evidence type="ECO:0000256" key="2">
    <source>
        <dbReference type="SAM" id="MobiDB-lite"/>
    </source>
</evidence>
<evidence type="ECO:0000305" key="3"/>
<gene>
    <name type="primary">arl6ip4</name>
    <name type="ORF">si:ch211-275j6.4</name>
    <name type="ORF">zgc:111967</name>
</gene>
<name>AR6P4_DANRE</name>
<sequence length="221" mass="25369">MGGSDSDSRSRSRNREENKSRSLSSSSARRPSPNHEKKHEHSSEKKKMKRRRSSSSSSSSSSPSPSREKKAKKKKKRREAKKLKREKKKEKKEKKRQKKLALKAERAAALTASVPAPVPEEKPQTYLKTWQSEETKEHGPAMTDEQKAKLSTRRPLTKEEYEARQSVIRRVLDPETGRTRLIRGDGEILEEIVSKERHKDINKQSTRGDGDAFQKRLGISR</sequence>
<proteinExistence type="evidence at transcript level"/>
<organism>
    <name type="scientific">Danio rerio</name>
    <name type="common">Zebrafish</name>
    <name type="synonym">Brachydanio rerio</name>
    <dbReference type="NCBI Taxonomy" id="7955"/>
    <lineage>
        <taxon>Eukaryota</taxon>
        <taxon>Metazoa</taxon>
        <taxon>Chordata</taxon>
        <taxon>Craniata</taxon>
        <taxon>Vertebrata</taxon>
        <taxon>Euteleostomi</taxon>
        <taxon>Actinopterygii</taxon>
        <taxon>Neopterygii</taxon>
        <taxon>Teleostei</taxon>
        <taxon>Ostariophysi</taxon>
        <taxon>Cypriniformes</taxon>
        <taxon>Danionidae</taxon>
        <taxon>Danioninae</taxon>
        <taxon>Danio</taxon>
    </lineage>
</organism>
<protein>
    <recommendedName>
        <fullName>ADP-ribosylation factor-like protein 6-interacting protein 4</fullName>
        <shortName>ARL-6-interacting protein 4</shortName>
        <shortName>Aip-4</shortName>
    </recommendedName>
</protein>
<dbReference type="EMBL" id="CR847941">
    <property type="protein sequence ID" value="CAN87844.1"/>
    <property type="molecule type" value="Genomic_DNA"/>
</dbReference>
<dbReference type="EMBL" id="BC095624">
    <property type="protein sequence ID" value="AAH95624.1"/>
    <property type="molecule type" value="mRNA"/>
</dbReference>
<dbReference type="RefSeq" id="NP_001018594.1">
    <property type="nucleotide sequence ID" value="NM_001020758.1"/>
</dbReference>
<dbReference type="STRING" id="7955.ENSDARP00000137044"/>
<dbReference type="PaxDb" id="7955-ENSDARP00000124884"/>
<dbReference type="Ensembl" id="ENSDART00000169013">
    <property type="protein sequence ID" value="ENSDARP00000137044"/>
    <property type="gene ID" value="ENSDARG00000105036"/>
</dbReference>
<dbReference type="Ensembl" id="ENSDART00000182043">
    <property type="protein sequence ID" value="ENSDARP00000147318"/>
    <property type="gene ID" value="ENSDARG00000110324"/>
</dbReference>
<dbReference type="GeneID" id="553796"/>
<dbReference type="KEGG" id="dre:553796"/>
<dbReference type="AGR" id="ZFIN:ZDB-GENE-050522-405"/>
<dbReference type="CTD" id="51329"/>
<dbReference type="ZFIN" id="ZDB-GENE-050522-405">
    <property type="gene designation" value="arl6ip4"/>
</dbReference>
<dbReference type="eggNOG" id="ENOG502RYBZ">
    <property type="taxonomic scope" value="Eukaryota"/>
</dbReference>
<dbReference type="HOGENOM" id="CLU_055563_1_0_1"/>
<dbReference type="InParanoid" id="Q502P0"/>
<dbReference type="OMA" id="WHKSARE"/>
<dbReference type="OrthoDB" id="48562at2759"/>
<dbReference type="TreeFam" id="TF350468"/>
<dbReference type="PRO" id="PR:Q502P0"/>
<dbReference type="Proteomes" id="UP000000437">
    <property type="component" value="Alternate scaffold 5"/>
</dbReference>
<dbReference type="Proteomes" id="UP000000437">
    <property type="component" value="Chromosome 5"/>
</dbReference>
<dbReference type="Bgee" id="ENSDARG00000105036">
    <property type="expression patterns" value="Expressed in gastrula and 29 other cell types or tissues"/>
</dbReference>
<dbReference type="GO" id="GO:0016607">
    <property type="term" value="C:nuclear speck"/>
    <property type="evidence" value="ECO:0007669"/>
    <property type="project" value="UniProtKB-SubCell"/>
</dbReference>
<dbReference type="GO" id="GO:0005730">
    <property type="term" value="C:nucleolus"/>
    <property type="evidence" value="ECO:0007669"/>
    <property type="project" value="UniProtKB-SubCell"/>
</dbReference>
<dbReference type="GO" id="GO:0006397">
    <property type="term" value="P:mRNA processing"/>
    <property type="evidence" value="ECO:0007669"/>
    <property type="project" value="UniProtKB-KW"/>
</dbReference>
<dbReference type="GO" id="GO:0008380">
    <property type="term" value="P:RNA splicing"/>
    <property type="evidence" value="ECO:0007669"/>
    <property type="project" value="UniProtKB-KW"/>
</dbReference>
<dbReference type="InterPro" id="IPR019532">
    <property type="entry name" value="Nucl_RNA-splicing_assoc_SR-25"/>
</dbReference>
<dbReference type="Pfam" id="PF10500">
    <property type="entry name" value="SR-25"/>
    <property type="match status" value="1"/>
</dbReference>
<feature type="chain" id="PRO_0000312274" description="ADP-ribosylation factor-like protein 6-interacting protein 4">
    <location>
        <begin position="1"/>
        <end position="221"/>
    </location>
</feature>
<feature type="region of interest" description="Disordered" evidence="2">
    <location>
        <begin position="1"/>
        <end position="162"/>
    </location>
</feature>
<feature type="region of interest" description="Disordered" evidence="2">
    <location>
        <begin position="196"/>
        <end position="221"/>
    </location>
</feature>
<feature type="compositionally biased region" description="Basic and acidic residues" evidence="2">
    <location>
        <begin position="1"/>
        <end position="20"/>
    </location>
</feature>
<feature type="compositionally biased region" description="Low complexity" evidence="2">
    <location>
        <begin position="21"/>
        <end position="31"/>
    </location>
</feature>
<feature type="compositionally biased region" description="Basic and acidic residues" evidence="2">
    <location>
        <begin position="33"/>
        <end position="45"/>
    </location>
</feature>
<feature type="compositionally biased region" description="Low complexity" evidence="2">
    <location>
        <begin position="54"/>
        <end position="65"/>
    </location>
</feature>
<feature type="compositionally biased region" description="Basic residues" evidence="2">
    <location>
        <begin position="69"/>
        <end position="101"/>
    </location>
</feature>
<feature type="compositionally biased region" description="Basic and acidic residues" evidence="2">
    <location>
        <begin position="131"/>
        <end position="148"/>
    </location>
</feature>
<feature type="compositionally biased region" description="Basic and acidic residues" evidence="2">
    <location>
        <begin position="196"/>
        <end position="214"/>
    </location>
</feature>
<accession>Q502P0</accession>